<reference key="1">
    <citation type="journal article" date="1993" name="Biochim. Biophys. Acta">
        <title>Nucleotide sequences of the Macaca fascicularis apolipoprotein C-III and A-IV genes.</title>
        <authorList>
            <person name="Osada J."/>
            <person name="Pocovi M."/>
            <person name="Nicolosi R.J."/>
            <person name="Schaefer E.J."/>
            <person name="Ordovas J.M."/>
        </authorList>
    </citation>
    <scope>NUCLEOTIDE SEQUENCE [GENOMIC DNA]</scope>
    <source>
        <tissue>Leukocyte</tissue>
    </source>
</reference>
<evidence type="ECO:0000250" key="1"/>
<evidence type="ECO:0000250" key="2">
    <source>
        <dbReference type="UniProtKB" id="P06727"/>
    </source>
</evidence>
<evidence type="ECO:0000256" key="3">
    <source>
        <dbReference type="SAM" id="MobiDB-lite"/>
    </source>
</evidence>
<evidence type="ECO:0000305" key="4"/>
<proteinExistence type="evidence at transcript level"/>
<gene>
    <name type="primary">APOA4</name>
</gene>
<accession>P33621</accession>
<organism>
    <name type="scientific">Macaca fascicularis</name>
    <name type="common">Crab-eating macaque</name>
    <name type="synonym">Cynomolgus monkey</name>
    <dbReference type="NCBI Taxonomy" id="9541"/>
    <lineage>
        <taxon>Eukaryota</taxon>
        <taxon>Metazoa</taxon>
        <taxon>Chordata</taxon>
        <taxon>Craniata</taxon>
        <taxon>Vertebrata</taxon>
        <taxon>Euteleostomi</taxon>
        <taxon>Mammalia</taxon>
        <taxon>Eutheria</taxon>
        <taxon>Euarchontoglires</taxon>
        <taxon>Primates</taxon>
        <taxon>Haplorrhini</taxon>
        <taxon>Catarrhini</taxon>
        <taxon>Cercopithecidae</taxon>
        <taxon>Cercopithecinae</taxon>
        <taxon>Macaca</taxon>
    </lineage>
</organism>
<comment type="function">
    <text>May have a role in chylomicrons and VLDL secretion and catabolism. Required for efficient activation of lipoprotein lipase by ApoC-II; potent activator of LCAT. Apoa-IV is a major component of HDL and chylomicrons.</text>
</comment>
<comment type="subunit">
    <text evidence="2">Homodimer.</text>
</comment>
<comment type="subcellular location">
    <subcellularLocation>
        <location>Secreted</location>
    </subcellularLocation>
</comment>
<comment type="tissue specificity">
    <text>Secreted in plasma.</text>
</comment>
<comment type="domain">
    <text>Nine of the thirteen 22-amino acid tandem repeats (each 22-mer is actually a tandem array of two, A and B, related 11-mers) occurring in this sequence are predicted to be highly alpha-helical, and many of these helices are amphipathic. They may therefore serve as lipid-binding domains with lecithin:cholesterol acyltransferase (LCAT) activating abilities.</text>
</comment>
<comment type="PTM">
    <text evidence="1">Phosphorylation sites are present in the extracellular medium.</text>
</comment>
<comment type="similarity">
    <text evidence="4">Belongs to the apolipoprotein A1/A4/E family.</text>
</comment>
<dbReference type="EMBL" id="X68361">
    <property type="protein sequence ID" value="CAA48421.1"/>
    <property type="molecule type" value="Genomic_DNA"/>
</dbReference>
<dbReference type="PIR" id="S30195">
    <property type="entry name" value="S29565"/>
</dbReference>
<dbReference type="SMR" id="P33621"/>
<dbReference type="STRING" id="9541.ENSMFAP00000029890"/>
<dbReference type="eggNOG" id="ENOG502QSC5">
    <property type="taxonomic scope" value="Eukaryota"/>
</dbReference>
<dbReference type="Proteomes" id="UP000233100">
    <property type="component" value="Unplaced"/>
</dbReference>
<dbReference type="GO" id="GO:0042627">
    <property type="term" value="C:chylomicron"/>
    <property type="evidence" value="ECO:0007669"/>
    <property type="project" value="UniProtKB-KW"/>
</dbReference>
<dbReference type="GO" id="GO:1903561">
    <property type="term" value="C:extracellular vesicle"/>
    <property type="evidence" value="ECO:0007669"/>
    <property type="project" value="TreeGrafter"/>
</dbReference>
<dbReference type="GO" id="GO:0034364">
    <property type="term" value="C:high-density lipoprotein particle"/>
    <property type="evidence" value="ECO:0007669"/>
    <property type="project" value="UniProtKB-KW"/>
</dbReference>
<dbReference type="GO" id="GO:0034362">
    <property type="term" value="C:low-density lipoprotein particle"/>
    <property type="evidence" value="ECO:0007669"/>
    <property type="project" value="TreeGrafter"/>
</dbReference>
<dbReference type="GO" id="GO:0034361">
    <property type="term" value="C:very-low-density lipoprotein particle"/>
    <property type="evidence" value="ECO:0007669"/>
    <property type="project" value="TreeGrafter"/>
</dbReference>
<dbReference type="GO" id="GO:0120020">
    <property type="term" value="F:cholesterol transfer activity"/>
    <property type="evidence" value="ECO:0007669"/>
    <property type="project" value="TreeGrafter"/>
</dbReference>
<dbReference type="GO" id="GO:0060228">
    <property type="term" value="F:phosphatidylcholine-sterol O-acyltransferase activator activity"/>
    <property type="evidence" value="ECO:0007669"/>
    <property type="project" value="TreeGrafter"/>
</dbReference>
<dbReference type="GO" id="GO:0005543">
    <property type="term" value="F:phospholipid binding"/>
    <property type="evidence" value="ECO:0007669"/>
    <property type="project" value="TreeGrafter"/>
</dbReference>
<dbReference type="GO" id="GO:0055090">
    <property type="term" value="P:acylglycerol homeostasis"/>
    <property type="evidence" value="ECO:0007669"/>
    <property type="project" value="TreeGrafter"/>
</dbReference>
<dbReference type="GO" id="GO:0033344">
    <property type="term" value="P:cholesterol efflux"/>
    <property type="evidence" value="ECO:0007669"/>
    <property type="project" value="TreeGrafter"/>
</dbReference>
<dbReference type="GO" id="GO:0008203">
    <property type="term" value="P:cholesterol metabolic process"/>
    <property type="evidence" value="ECO:0007669"/>
    <property type="project" value="TreeGrafter"/>
</dbReference>
<dbReference type="GO" id="GO:0042157">
    <property type="term" value="P:lipoprotein metabolic process"/>
    <property type="evidence" value="ECO:0007669"/>
    <property type="project" value="InterPro"/>
</dbReference>
<dbReference type="GO" id="GO:0033700">
    <property type="term" value="P:phospholipid efflux"/>
    <property type="evidence" value="ECO:0007669"/>
    <property type="project" value="TreeGrafter"/>
</dbReference>
<dbReference type="FunFam" id="1.20.5.20:FF:000001">
    <property type="entry name" value="apolipoprotein A-I"/>
    <property type="match status" value="1"/>
</dbReference>
<dbReference type="FunFam" id="1.20.120.20:FF:000004">
    <property type="entry name" value="Apolipoprotein A-IV"/>
    <property type="match status" value="1"/>
</dbReference>
<dbReference type="FunFam" id="1.20.120.20:FF:000005">
    <property type="entry name" value="Apolipoprotein A-IV"/>
    <property type="match status" value="1"/>
</dbReference>
<dbReference type="Gene3D" id="1.20.120.20">
    <property type="entry name" value="Apolipoprotein"/>
    <property type="match status" value="2"/>
</dbReference>
<dbReference type="InterPro" id="IPR000074">
    <property type="entry name" value="ApoA_E"/>
</dbReference>
<dbReference type="InterPro" id="IPR050163">
    <property type="entry name" value="Apolipoprotein_A1/A4/E"/>
</dbReference>
<dbReference type="PANTHER" id="PTHR18976">
    <property type="entry name" value="APOLIPOPROTEIN"/>
    <property type="match status" value="1"/>
</dbReference>
<dbReference type="PANTHER" id="PTHR18976:SF1">
    <property type="entry name" value="APOLIPOPROTEIN A-IV"/>
    <property type="match status" value="1"/>
</dbReference>
<dbReference type="Pfam" id="PF01442">
    <property type="entry name" value="Apolipoprotein"/>
    <property type="match status" value="2"/>
</dbReference>
<dbReference type="SUPFAM" id="SSF58113">
    <property type="entry name" value="Apolipoprotein A-I"/>
    <property type="match status" value="2"/>
</dbReference>
<keyword id="KW-0162">Chylomicron</keyword>
<keyword id="KW-0345">HDL</keyword>
<keyword id="KW-0445">Lipid transport</keyword>
<keyword id="KW-0597">Phosphoprotein</keyword>
<keyword id="KW-1185">Reference proteome</keyword>
<keyword id="KW-0677">Repeat</keyword>
<keyword id="KW-0964">Secreted</keyword>
<keyword id="KW-0732">Signal</keyword>
<keyword id="KW-0813">Transport</keyword>
<sequence length="429" mass="49877">MFLKAVVLTLALVAVTGARAEVSADQVATVMWDYFSQLSSNAKEAVEHLQKSELTQQLNALFQDKLGEVNTYAGDLQKKLVPFATELHERLAKDSEKLKEEIRKELEEVRARLLPHANEVSQKIGENVRELQQRLEPYTDQLRTQVNTQTEQLRRQLTPYAQRMERVLRENADSLQTSLRPHADQLKAKIDQNVEELKERLTPYADEFKVKIDQTVEELRRSLAPYAQDAQEKLNHQLEGLAFQMKKNAEELKARISASAEELRQRLAPLAEDMRGNLRGNTEGLQKSLAELGGHLDRHVEEFRLRVEPYGENFNKALVQQMEQLRQKLGPHAGDVEGHLSFLEKDLRDKVNSFFSTFKEKESQDNTLSLPEPEQQREQQQEQQQEQEQEQQQQQEQQQQQEQQREQQQQEQQQEQQQEQVQMLAPLES</sequence>
<protein>
    <recommendedName>
        <fullName>Apolipoprotein A-IV</fullName>
        <shortName>Apo-AIV</shortName>
        <shortName>ApoA-IV</shortName>
    </recommendedName>
    <alternativeName>
        <fullName>Apolipoprotein A4</fullName>
    </alternativeName>
</protein>
<feature type="signal peptide" evidence="1">
    <location>
        <begin position="1"/>
        <end position="20"/>
    </location>
</feature>
<feature type="chain" id="PRO_0000001976" description="Apolipoprotein A-IV">
    <location>
        <begin position="21"/>
        <end position="429"/>
    </location>
</feature>
<feature type="repeat" description="1">
    <location>
        <begin position="33"/>
        <end position="54"/>
    </location>
</feature>
<feature type="repeat" description="2">
    <location>
        <begin position="60"/>
        <end position="81"/>
    </location>
</feature>
<feature type="repeat" description="3">
    <location>
        <begin position="82"/>
        <end position="103"/>
    </location>
</feature>
<feature type="repeat" description="4">
    <location>
        <begin position="115"/>
        <end position="136"/>
    </location>
</feature>
<feature type="repeat" description="5">
    <location>
        <begin position="137"/>
        <end position="158"/>
    </location>
</feature>
<feature type="repeat" description="6">
    <location>
        <begin position="159"/>
        <end position="180"/>
    </location>
</feature>
<feature type="repeat" description="7">
    <location>
        <begin position="181"/>
        <end position="202"/>
    </location>
</feature>
<feature type="repeat" description="8">
    <location>
        <begin position="203"/>
        <end position="224"/>
    </location>
</feature>
<feature type="repeat" description="9">
    <location>
        <begin position="225"/>
        <end position="246"/>
    </location>
</feature>
<feature type="repeat" description="10">
    <location>
        <begin position="247"/>
        <end position="268"/>
    </location>
</feature>
<feature type="repeat" description="11">
    <location>
        <begin position="269"/>
        <end position="286"/>
    </location>
</feature>
<feature type="repeat" description="12">
    <location>
        <begin position="287"/>
        <end position="308"/>
    </location>
</feature>
<feature type="repeat" description="13">
    <location>
        <begin position="309"/>
        <end position="330"/>
    </location>
</feature>
<feature type="region of interest" description="13 X 22 AA approximate tandem repeats">
    <location>
        <begin position="33"/>
        <end position="330"/>
    </location>
</feature>
<feature type="region of interest" description="Disordered" evidence="3">
    <location>
        <begin position="359"/>
        <end position="429"/>
    </location>
</feature>
<feature type="compositionally biased region" description="Low complexity" evidence="3">
    <location>
        <begin position="381"/>
        <end position="420"/>
    </location>
</feature>
<name>APOA4_MACFA</name>